<sequence length="500" mass="54714">MSIIDTRTPEPKRFISGATGDWEVVIGMEVHAQVTSESKLFSGASTAFGAEPNSNVSLVDAAMPGMLPVINLECVRQAVRTGIGLNAQINLKSVFDRKNYFYPDLPQGYQISQFKQPIVGEGKIMISVGPDNKGQFEDVEIGIERLHLEQDAGKSMHDQHPTMSYVDLNRSGVALMEIVSKPDLRSSDEARAYLTKLRTIVRYLGTCDGNMDEGSMRADVNVSVRRPGGEFGTRCEIKNVNSIRFVGQAIEYEARRQIAILEDGGVIDQETRLFDPVKGETRSMRSKEEAHDYRYFPDPDLLPLEFDQAFVDALAAKLPELPDVKKQRLVETLGISVYDASILVTEKAIADYYEAVAEGRDGKAAANWVINDLLGALNKAGKDIEESPISPAQLGAIIDLIKEGTISGKIAKDLFEIVWNEGGDPKKLVEERGMKQVTDTGAIEKAVDDVIAANPDKVEQAKAKPTLAGWFVGQVMKATGGKANPQAVNELVKSKLGIEE</sequence>
<evidence type="ECO:0000255" key="1">
    <source>
        <dbReference type="HAMAP-Rule" id="MF_00121"/>
    </source>
</evidence>
<feature type="chain" id="PRO_0000241200" description="Aspartyl/glutamyl-tRNA(Asn/Gln) amidotransferase subunit B">
    <location>
        <begin position="1"/>
        <end position="500"/>
    </location>
</feature>
<organism>
    <name type="scientific">Brucella abortus biovar 1 (strain 9-941)</name>
    <dbReference type="NCBI Taxonomy" id="262698"/>
    <lineage>
        <taxon>Bacteria</taxon>
        <taxon>Pseudomonadati</taxon>
        <taxon>Pseudomonadota</taxon>
        <taxon>Alphaproteobacteria</taxon>
        <taxon>Hyphomicrobiales</taxon>
        <taxon>Brucellaceae</taxon>
        <taxon>Brucella/Ochrobactrum group</taxon>
        <taxon>Brucella</taxon>
    </lineage>
</organism>
<keyword id="KW-0067">ATP-binding</keyword>
<keyword id="KW-0436">Ligase</keyword>
<keyword id="KW-0547">Nucleotide-binding</keyword>
<keyword id="KW-0648">Protein biosynthesis</keyword>
<comment type="function">
    <text evidence="1">Allows the formation of correctly charged Asn-tRNA(Asn) or Gln-tRNA(Gln) through the transamidation of misacylated Asp-tRNA(Asn) or Glu-tRNA(Gln) in organisms which lack either or both of asparaginyl-tRNA or glutaminyl-tRNA synthetases. The reaction takes place in the presence of glutamine and ATP through an activated phospho-Asp-tRNA(Asn) or phospho-Glu-tRNA(Gln).</text>
</comment>
<comment type="catalytic activity">
    <reaction evidence="1">
        <text>L-glutamyl-tRNA(Gln) + L-glutamine + ATP + H2O = L-glutaminyl-tRNA(Gln) + L-glutamate + ADP + phosphate + H(+)</text>
        <dbReference type="Rhea" id="RHEA:17521"/>
        <dbReference type="Rhea" id="RHEA-COMP:9681"/>
        <dbReference type="Rhea" id="RHEA-COMP:9684"/>
        <dbReference type="ChEBI" id="CHEBI:15377"/>
        <dbReference type="ChEBI" id="CHEBI:15378"/>
        <dbReference type="ChEBI" id="CHEBI:29985"/>
        <dbReference type="ChEBI" id="CHEBI:30616"/>
        <dbReference type="ChEBI" id="CHEBI:43474"/>
        <dbReference type="ChEBI" id="CHEBI:58359"/>
        <dbReference type="ChEBI" id="CHEBI:78520"/>
        <dbReference type="ChEBI" id="CHEBI:78521"/>
        <dbReference type="ChEBI" id="CHEBI:456216"/>
    </reaction>
</comment>
<comment type="catalytic activity">
    <reaction evidence="1">
        <text>L-aspartyl-tRNA(Asn) + L-glutamine + ATP + H2O = L-asparaginyl-tRNA(Asn) + L-glutamate + ADP + phosphate + 2 H(+)</text>
        <dbReference type="Rhea" id="RHEA:14513"/>
        <dbReference type="Rhea" id="RHEA-COMP:9674"/>
        <dbReference type="Rhea" id="RHEA-COMP:9677"/>
        <dbReference type="ChEBI" id="CHEBI:15377"/>
        <dbReference type="ChEBI" id="CHEBI:15378"/>
        <dbReference type="ChEBI" id="CHEBI:29985"/>
        <dbReference type="ChEBI" id="CHEBI:30616"/>
        <dbReference type="ChEBI" id="CHEBI:43474"/>
        <dbReference type="ChEBI" id="CHEBI:58359"/>
        <dbReference type="ChEBI" id="CHEBI:78515"/>
        <dbReference type="ChEBI" id="CHEBI:78516"/>
        <dbReference type="ChEBI" id="CHEBI:456216"/>
    </reaction>
</comment>
<comment type="subunit">
    <text evidence="1">Heterotrimer of A, B and C subunits.</text>
</comment>
<comment type="similarity">
    <text evidence="1">Belongs to the GatB/GatE family. GatB subfamily.</text>
</comment>
<gene>
    <name evidence="1" type="primary">gatB</name>
    <name type="ordered locus">BruAb1_0911</name>
</gene>
<reference key="1">
    <citation type="journal article" date="2005" name="J. Bacteriol.">
        <title>Completion of the genome sequence of Brucella abortus and comparison to the highly similar genomes of Brucella melitensis and Brucella suis.</title>
        <authorList>
            <person name="Halling S.M."/>
            <person name="Peterson-Burch B.D."/>
            <person name="Bricker B.J."/>
            <person name="Zuerner R.L."/>
            <person name="Qing Z."/>
            <person name="Li L.-L."/>
            <person name="Kapur V."/>
            <person name="Alt D.P."/>
            <person name="Olsen S.C."/>
        </authorList>
    </citation>
    <scope>NUCLEOTIDE SEQUENCE [LARGE SCALE GENOMIC DNA]</scope>
    <source>
        <strain>9-941</strain>
    </source>
</reference>
<protein>
    <recommendedName>
        <fullName evidence="1">Aspartyl/glutamyl-tRNA(Asn/Gln) amidotransferase subunit B</fullName>
        <shortName evidence="1">Asp/Glu-ADT subunit B</shortName>
        <ecNumber evidence="1">6.3.5.-</ecNumber>
    </recommendedName>
</protein>
<dbReference type="EC" id="6.3.5.-" evidence="1"/>
<dbReference type="EMBL" id="AE017223">
    <property type="protein sequence ID" value="AAX74276.1"/>
    <property type="molecule type" value="Genomic_DNA"/>
</dbReference>
<dbReference type="RefSeq" id="WP_002964030.1">
    <property type="nucleotide sequence ID" value="NC_006932.1"/>
</dbReference>
<dbReference type="SMR" id="Q57DK8"/>
<dbReference type="EnsemblBacteria" id="AAX74276">
    <property type="protein sequence ID" value="AAX74276"/>
    <property type="gene ID" value="BruAb1_0911"/>
</dbReference>
<dbReference type="GeneID" id="97533805"/>
<dbReference type="KEGG" id="bmb:BruAb1_0911"/>
<dbReference type="HOGENOM" id="CLU_019240_0_0_5"/>
<dbReference type="Proteomes" id="UP000000540">
    <property type="component" value="Chromosome I"/>
</dbReference>
<dbReference type="GO" id="GO:0050566">
    <property type="term" value="F:asparaginyl-tRNA synthase (glutamine-hydrolyzing) activity"/>
    <property type="evidence" value="ECO:0007669"/>
    <property type="project" value="RHEA"/>
</dbReference>
<dbReference type="GO" id="GO:0005524">
    <property type="term" value="F:ATP binding"/>
    <property type="evidence" value="ECO:0007669"/>
    <property type="project" value="UniProtKB-KW"/>
</dbReference>
<dbReference type="GO" id="GO:0050567">
    <property type="term" value="F:glutaminyl-tRNA synthase (glutamine-hydrolyzing) activity"/>
    <property type="evidence" value="ECO:0007669"/>
    <property type="project" value="UniProtKB-UniRule"/>
</dbReference>
<dbReference type="GO" id="GO:0070681">
    <property type="term" value="P:glutaminyl-tRNAGln biosynthesis via transamidation"/>
    <property type="evidence" value="ECO:0007669"/>
    <property type="project" value="TreeGrafter"/>
</dbReference>
<dbReference type="GO" id="GO:0006412">
    <property type="term" value="P:translation"/>
    <property type="evidence" value="ECO:0007669"/>
    <property type="project" value="UniProtKB-UniRule"/>
</dbReference>
<dbReference type="FunFam" id="1.10.10.410:FF:000001">
    <property type="entry name" value="Aspartyl/glutamyl-tRNA(Asn/Gln) amidotransferase subunit B"/>
    <property type="match status" value="1"/>
</dbReference>
<dbReference type="Gene3D" id="1.10.10.410">
    <property type="match status" value="1"/>
</dbReference>
<dbReference type="Gene3D" id="1.10.150.380">
    <property type="entry name" value="GatB domain, N-terminal subdomain"/>
    <property type="match status" value="1"/>
</dbReference>
<dbReference type="HAMAP" id="MF_00121">
    <property type="entry name" value="GatB"/>
    <property type="match status" value="1"/>
</dbReference>
<dbReference type="InterPro" id="IPR017959">
    <property type="entry name" value="Asn/Gln-tRNA_amidoTrfase_suB/E"/>
</dbReference>
<dbReference type="InterPro" id="IPR006075">
    <property type="entry name" value="Asn/Gln-tRNA_Trfase_suB/E_cat"/>
</dbReference>
<dbReference type="InterPro" id="IPR018027">
    <property type="entry name" value="Asn/Gln_amidotransferase"/>
</dbReference>
<dbReference type="InterPro" id="IPR003789">
    <property type="entry name" value="Asn/Gln_tRNA_amidoTrase-B-like"/>
</dbReference>
<dbReference type="InterPro" id="IPR004413">
    <property type="entry name" value="GatB"/>
</dbReference>
<dbReference type="InterPro" id="IPR042114">
    <property type="entry name" value="GatB_C_1"/>
</dbReference>
<dbReference type="InterPro" id="IPR023168">
    <property type="entry name" value="GatB_Yqey_C_2"/>
</dbReference>
<dbReference type="InterPro" id="IPR017958">
    <property type="entry name" value="Gln-tRNA_amidoTrfase_suB_CS"/>
</dbReference>
<dbReference type="InterPro" id="IPR014746">
    <property type="entry name" value="Gln_synth/guanido_kin_cat_dom"/>
</dbReference>
<dbReference type="NCBIfam" id="TIGR00133">
    <property type="entry name" value="gatB"/>
    <property type="match status" value="1"/>
</dbReference>
<dbReference type="NCBIfam" id="NF004012">
    <property type="entry name" value="PRK05477.1-2"/>
    <property type="match status" value="1"/>
</dbReference>
<dbReference type="NCBIfam" id="NF004014">
    <property type="entry name" value="PRK05477.1-4"/>
    <property type="match status" value="1"/>
</dbReference>
<dbReference type="NCBIfam" id="NF004015">
    <property type="entry name" value="PRK05477.1-5"/>
    <property type="match status" value="1"/>
</dbReference>
<dbReference type="PANTHER" id="PTHR11659">
    <property type="entry name" value="GLUTAMYL-TRNA GLN AMIDOTRANSFERASE SUBUNIT B MITOCHONDRIAL AND PROKARYOTIC PET112-RELATED"/>
    <property type="match status" value="1"/>
</dbReference>
<dbReference type="PANTHER" id="PTHR11659:SF0">
    <property type="entry name" value="GLUTAMYL-TRNA(GLN) AMIDOTRANSFERASE SUBUNIT B, MITOCHONDRIAL"/>
    <property type="match status" value="1"/>
</dbReference>
<dbReference type="Pfam" id="PF02934">
    <property type="entry name" value="GatB_N"/>
    <property type="match status" value="1"/>
</dbReference>
<dbReference type="Pfam" id="PF02637">
    <property type="entry name" value="GatB_Yqey"/>
    <property type="match status" value="1"/>
</dbReference>
<dbReference type="SMART" id="SM00845">
    <property type="entry name" value="GatB_Yqey"/>
    <property type="match status" value="1"/>
</dbReference>
<dbReference type="SUPFAM" id="SSF89095">
    <property type="entry name" value="GatB/YqeY motif"/>
    <property type="match status" value="1"/>
</dbReference>
<dbReference type="SUPFAM" id="SSF55931">
    <property type="entry name" value="Glutamine synthetase/guanido kinase"/>
    <property type="match status" value="1"/>
</dbReference>
<dbReference type="PROSITE" id="PS01234">
    <property type="entry name" value="GATB"/>
    <property type="match status" value="1"/>
</dbReference>
<proteinExistence type="inferred from homology"/>
<name>GATB_BRUAB</name>
<accession>Q57DK8</accession>